<gene>
    <name evidence="1" type="primary">dnaJ</name>
</gene>
<organism>
    <name type="scientific">Erysipelothrix rhusiopathiae</name>
    <dbReference type="NCBI Taxonomy" id="1648"/>
    <lineage>
        <taxon>Bacteria</taxon>
        <taxon>Bacillati</taxon>
        <taxon>Bacillota</taxon>
        <taxon>Erysipelotrichia</taxon>
        <taxon>Erysipelotrichales</taxon>
        <taxon>Erysipelotrichaceae</taxon>
        <taxon>Erysipelothrix</taxon>
    </lineage>
</organism>
<comment type="function">
    <text evidence="1">Participates actively in the response to hyperosmotic and heat shock by preventing the aggregation of stress-denatured proteins and by disaggregating proteins, also in an autonomous, DnaK-independent fashion. Unfolded proteins bind initially to DnaJ; upon interaction with the DnaJ-bound protein, DnaK hydrolyzes its bound ATP, resulting in the formation of a stable complex. GrpE releases ADP from DnaK; ATP binding to DnaK triggers the release of the substrate protein, thus completing the reaction cycle. Several rounds of ATP-dependent interactions between DnaJ, DnaK and GrpE are required for fully efficient folding. Also involved, together with DnaK and GrpE, in the DNA replication of plasmids through activation of initiation proteins.</text>
</comment>
<comment type="cofactor">
    <cofactor evidence="1">
        <name>Zn(2+)</name>
        <dbReference type="ChEBI" id="CHEBI:29105"/>
    </cofactor>
    <text evidence="1">Binds 2 Zn(2+) ions per monomer.</text>
</comment>
<comment type="subunit">
    <text evidence="1">Homodimer.</text>
</comment>
<comment type="subcellular location">
    <subcellularLocation>
        <location evidence="1">Cytoplasm</location>
    </subcellularLocation>
</comment>
<comment type="induction">
    <text>By heat shock.</text>
</comment>
<comment type="domain">
    <text evidence="1">The J domain is necessary and sufficient to stimulate DnaK ATPase activity. Zinc center 1 plays an important role in the autonomous, DnaK-independent chaperone activity of DnaJ. Zinc center 2 is essential for interaction with DnaK and for DnaJ activity.</text>
</comment>
<comment type="similarity">
    <text evidence="1">Belongs to the DnaJ family.</text>
</comment>
<keyword id="KW-0143">Chaperone</keyword>
<keyword id="KW-0963">Cytoplasm</keyword>
<keyword id="KW-0235">DNA replication</keyword>
<keyword id="KW-0479">Metal-binding</keyword>
<keyword id="KW-0677">Repeat</keyword>
<keyword id="KW-0346">Stress response</keyword>
<keyword id="KW-0862">Zinc</keyword>
<keyword id="KW-0863">Zinc-finger</keyword>
<evidence type="ECO:0000255" key="1">
    <source>
        <dbReference type="HAMAP-Rule" id="MF_01152"/>
    </source>
</evidence>
<sequence length="370" mass="40331">MADKRDFYEILGVSKSATDAEIKKAYRQLAKKYHPDINKEDGAEAKFKEVQEAYEVLSDSQKRANYDQFGHAAFDQGAGGFGGGFSGGFDDFGDIFSSFFGGGGGGQRRNPNGPMKGQDRFMSMRIDFMEAVFGANKSVTLNVDEECTSCHGSGAHSKDDIKTCSRCGGTGQTVTQQRTPFGVFQSQATCPDCGGSGKTITKRCGECHGKGFNTKRVEVDIKIPAGIVTGQQLRVSGKGERGANGGPNGDLFIEIVVGTHKHFRREGNDIHINIPLSVIDATLGTEIEVPTVHGDVKLTIPAGTQPNTKFRLREKGVQDLRSGRMGDQYVEVKLEVPTKLSRQQREHLEALKETEVKGDSVFDRFKKAFK</sequence>
<protein>
    <recommendedName>
        <fullName evidence="1">Chaperone protein DnaJ</fullName>
    </recommendedName>
</protein>
<proteinExistence type="evidence at transcript level"/>
<dbReference type="EMBL" id="L08110">
    <property type="protein sequence ID" value="AAA71922.1"/>
    <property type="molecule type" value="Unassigned_DNA"/>
</dbReference>
<dbReference type="RefSeq" id="WP_013852761.1">
    <property type="nucleotide sequence ID" value="NZ_JAYEPP010000010.1"/>
</dbReference>
<dbReference type="SMR" id="Q05646"/>
<dbReference type="GeneID" id="41396129"/>
<dbReference type="OMA" id="MATDYYA"/>
<dbReference type="GO" id="GO:0005737">
    <property type="term" value="C:cytoplasm"/>
    <property type="evidence" value="ECO:0007669"/>
    <property type="project" value="UniProtKB-SubCell"/>
</dbReference>
<dbReference type="GO" id="GO:0005524">
    <property type="term" value="F:ATP binding"/>
    <property type="evidence" value="ECO:0007669"/>
    <property type="project" value="InterPro"/>
</dbReference>
<dbReference type="GO" id="GO:0031072">
    <property type="term" value="F:heat shock protein binding"/>
    <property type="evidence" value="ECO:0007669"/>
    <property type="project" value="InterPro"/>
</dbReference>
<dbReference type="GO" id="GO:0051082">
    <property type="term" value="F:unfolded protein binding"/>
    <property type="evidence" value="ECO:0007669"/>
    <property type="project" value="UniProtKB-UniRule"/>
</dbReference>
<dbReference type="GO" id="GO:0008270">
    <property type="term" value="F:zinc ion binding"/>
    <property type="evidence" value="ECO:0007669"/>
    <property type="project" value="UniProtKB-UniRule"/>
</dbReference>
<dbReference type="GO" id="GO:0051085">
    <property type="term" value="P:chaperone cofactor-dependent protein refolding"/>
    <property type="evidence" value="ECO:0007669"/>
    <property type="project" value="TreeGrafter"/>
</dbReference>
<dbReference type="GO" id="GO:0006260">
    <property type="term" value="P:DNA replication"/>
    <property type="evidence" value="ECO:0007669"/>
    <property type="project" value="UniProtKB-KW"/>
</dbReference>
<dbReference type="GO" id="GO:0042026">
    <property type="term" value="P:protein refolding"/>
    <property type="evidence" value="ECO:0007669"/>
    <property type="project" value="TreeGrafter"/>
</dbReference>
<dbReference type="GO" id="GO:0009408">
    <property type="term" value="P:response to heat"/>
    <property type="evidence" value="ECO:0007669"/>
    <property type="project" value="InterPro"/>
</dbReference>
<dbReference type="CDD" id="cd06257">
    <property type="entry name" value="DnaJ"/>
    <property type="match status" value="1"/>
</dbReference>
<dbReference type="CDD" id="cd10747">
    <property type="entry name" value="DnaJ_C"/>
    <property type="match status" value="1"/>
</dbReference>
<dbReference type="FunFam" id="1.10.287.110:FF:000031">
    <property type="entry name" value="Molecular chaperone DnaJ"/>
    <property type="match status" value="1"/>
</dbReference>
<dbReference type="FunFam" id="2.10.230.10:FF:000002">
    <property type="entry name" value="Molecular chaperone DnaJ"/>
    <property type="match status" value="1"/>
</dbReference>
<dbReference type="FunFam" id="2.60.260.20:FF:000004">
    <property type="entry name" value="Molecular chaperone DnaJ"/>
    <property type="match status" value="1"/>
</dbReference>
<dbReference type="Gene3D" id="1.10.287.110">
    <property type="entry name" value="DnaJ domain"/>
    <property type="match status" value="1"/>
</dbReference>
<dbReference type="Gene3D" id="2.10.230.10">
    <property type="entry name" value="Heat shock protein DnaJ, cysteine-rich domain"/>
    <property type="match status" value="1"/>
</dbReference>
<dbReference type="Gene3D" id="2.60.260.20">
    <property type="entry name" value="Urease metallochaperone UreE, N-terminal domain"/>
    <property type="match status" value="2"/>
</dbReference>
<dbReference type="HAMAP" id="MF_01152">
    <property type="entry name" value="DnaJ"/>
    <property type="match status" value="1"/>
</dbReference>
<dbReference type="InterPro" id="IPR012724">
    <property type="entry name" value="DnaJ"/>
</dbReference>
<dbReference type="InterPro" id="IPR002939">
    <property type="entry name" value="DnaJ_C"/>
</dbReference>
<dbReference type="InterPro" id="IPR001623">
    <property type="entry name" value="DnaJ_domain"/>
</dbReference>
<dbReference type="InterPro" id="IPR018253">
    <property type="entry name" value="DnaJ_domain_CS"/>
</dbReference>
<dbReference type="InterPro" id="IPR008971">
    <property type="entry name" value="HSP40/DnaJ_pept-bd"/>
</dbReference>
<dbReference type="InterPro" id="IPR001305">
    <property type="entry name" value="HSP_DnaJ_Cys-rich_dom"/>
</dbReference>
<dbReference type="InterPro" id="IPR036410">
    <property type="entry name" value="HSP_DnaJ_Cys-rich_dom_sf"/>
</dbReference>
<dbReference type="InterPro" id="IPR036869">
    <property type="entry name" value="J_dom_sf"/>
</dbReference>
<dbReference type="NCBIfam" id="TIGR02349">
    <property type="entry name" value="DnaJ_bact"/>
    <property type="match status" value="1"/>
</dbReference>
<dbReference type="NCBIfam" id="NF008035">
    <property type="entry name" value="PRK10767.1"/>
    <property type="match status" value="1"/>
</dbReference>
<dbReference type="PANTHER" id="PTHR43096:SF48">
    <property type="entry name" value="CHAPERONE PROTEIN DNAJ"/>
    <property type="match status" value="1"/>
</dbReference>
<dbReference type="PANTHER" id="PTHR43096">
    <property type="entry name" value="DNAJ HOMOLOG 1, MITOCHONDRIAL-RELATED"/>
    <property type="match status" value="1"/>
</dbReference>
<dbReference type="Pfam" id="PF00226">
    <property type="entry name" value="DnaJ"/>
    <property type="match status" value="1"/>
</dbReference>
<dbReference type="Pfam" id="PF01556">
    <property type="entry name" value="DnaJ_C"/>
    <property type="match status" value="1"/>
</dbReference>
<dbReference type="Pfam" id="PF00684">
    <property type="entry name" value="DnaJ_CXXCXGXG"/>
    <property type="match status" value="1"/>
</dbReference>
<dbReference type="PRINTS" id="PR00625">
    <property type="entry name" value="JDOMAIN"/>
</dbReference>
<dbReference type="SMART" id="SM00271">
    <property type="entry name" value="DnaJ"/>
    <property type="match status" value="1"/>
</dbReference>
<dbReference type="SUPFAM" id="SSF46565">
    <property type="entry name" value="Chaperone J-domain"/>
    <property type="match status" value="1"/>
</dbReference>
<dbReference type="SUPFAM" id="SSF57938">
    <property type="entry name" value="DnaJ/Hsp40 cysteine-rich domain"/>
    <property type="match status" value="1"/>
</dbReference>
<dbReference type="SUPFAM" id="SSF49493">
    <property type="entry name" value="HSP40/DnaJ peptide-binding domain"/>
    <property type="match status" value="2"/>
</dbReference>
<dbReference type="PROSITE" id="PS00636">
    <property type="entry name" value="DNAJ_1"/>
    <property type="match status" value="1"/>
</dbReference>
<dbReference type="PROSITE" id="PS50076">
    <property type="entry name" value="DNAJ_2"/>
    <property type="match status" value="1"/>
</dbReference>
<dbReference type="PROSITE" id="PS51188">
    <property type="entry name" value="ZF_CR"/>
    <property type="match status" value="1"/>
</dbReference>
<reference key="1">
    <citation type="journal article" date="1993" name="FEMS Microbiol. Lett.">
        <title>Nucleotide sequence analysis and heterologous expression of the Erysipelothrix rhusiopathiae dnaJ gene.</title>
        <authorList>
            <person name="Rockabrand D."/>
            <person name="Partridge J."/>
            <person name="Krska J."/>
            <person name="Blum P."/>
        </authorList>
    </citation>
    <scope>NUCLEOTIDE SEQUENCE [GENOMIC DNA]</scope>
    <source>
        <strain>E1-6P</strain>
    </source>
</reference>
<name>DNAJ_ERYRH</name>
<accession>Q05646</accession>
<feature type="chain" id="PRO_0000070781" description="Chaperone protein DnaJ">
    <location>
        <begin position="1"/>
        <end position="370"/>
    </location>
</feature>
<feature type="domain" description="J" evidence="1">
    <location>
        <begin position="6"/>
        <end position="70"/>
    </location>
</feature>
<feature type="repeat" description="CXXCXGXG motif">
    <location>
        <begin position="147"/>
        <end position="154"/>
    </location>
</feature>
<feature type="repeat" description="CXXCXGXG motif">
    <location>
        <begin position="164"/>
        <end position="171"/>
    </location>
</feature>
<feature type="repeat" description="CXXCXGXG motif">
    <location>
        <begin position="190"/>
        <end position="197"/>
    </location>
</feature>
<feature type="repeat" description="CXXCXGXG motif">
    <location>
        <begin position="204"/>
        <end position="211"/>
    </location>
</feature>
<feature type="zinc finger region" description="CR-type" evidence="1">
    <location>
        <begin position="134"/>
        <end position="216"/>
    </location>
</feature>
<feature type="binding site" evidence="1">
    <location>
        <position position="147"/>
    </location>
    <ligand>
        <name>Zn(2+)</name>
        <dbReference type="ChEBI" id="CHEBI:29105"/>
        <label>1</label>
    </ligand>
</feature>
<feature type="binding site" evidence="1">
    <location>
        <position position="150"/>
    </location>
    <ligand>
        <name>Zn(2+)</name>
        <dbReference type="ChEBI" id="CHEBI:29105"/>
        <label>1</label>
    </ligand>
</feature>
<feature type="binding site" evidence="1">
    <location>
        <position position="164"/>
    </location>
    <ligand>
        <name>Zn(2+)</name>
        <dbReference type="ChEBI" id="CHEBI:29105"/>
        <label>2</label>
    </ligand>
</feature>
<feature type="binding site" evidence="1">
    <location>
        <position position="167"/>
    </location>
    <ligand>
        <name>Zn(2+)</name>
        <dbReference type="ChEBI" id="CHEBI:29105"/>
        <label>2</label>
    </ligand>
</feature>
<feature type="binding site" evidence="1">
    <location>
        <position position="190"/>
    </location>
    <ligand>
        <name>Zn(2+)</name>
        <dbReference type="ChEBI" id="CHEBI:29105"/>
        <label>2</label>
    </ligand>
</feature>
<feature type="binding site" evidence="1">
    <location>
        <position position="193"/>
    </location>
    <ligand>
        <name>Zn(2+)</name>
        <dbReference type="ChEBI" id="CHEBI:29105"/>
        <label>2</label>
    </ligand>
</feature>
<feature type="binding site" evidence="1">
    <location>
        <position position="204"/>
    </location>
    <ligand>
        <name>Zn(2+)</name>
        <dbReference type="ChEBI" id="CHEBI:29105"/>
        <label>1</label>
    </ligand>
</feature>
<feature type="binding site" evidence="1">
    <location>
        <position position="207"/>
    </location>
    <ligand>
        <name>Zn(2+)</name>
        <dbReference type="ChEBI" id="CHEBI:29105"/>
        <label>1</label>
    </ligand>
</feature>